<dbReference type="EMBL" id="CP000270">
    <property type="protein sequence ID" value="ABE30654.1"/>
    <property type="molecule type" value="Genomic_DNA"/>
</dbReference>
<dbReference type="RefSeq" id="WP_011488285.1">
    <property type="nucleotide sequence ID" value="NC_007951.1"/>
</dbReference>
<dbReference type="SMR" id="Q13Z35"/>
<dbReference type="STRING" id="266265.Bxe_A2316"/>
<dbReference type="KEGG" id="bxb:DR64_19"/>
<dbReference type="KEGG" id="bxe:Bxe_A2316"/>
<dbReference type="PATRIC" id="fig|266265.5.peg.2216"/>
<dbReference type="eggNOG" id="COG1970">
    <property type="taxonomic scope" value="Bacteria"/>
</dbReference>
<dbReference type="OrthoDB" id="9810350at2"/>
<dbReference type="Proteomes" id="UP000001817">
    <property type="component" value="Chromosome 1"/>
</dbReference>
<dbReference type="GO" id="GO:0005886">
    <property type="term" value="C:plasma membrane"/>
    <property type="evidence" value="ECO:0007669"/>
    <property type="project" value="UniProtKB-SubCell"/>
</dbReference>
<dbReference type="GO" id="GO:0008381">
    <property type="term" value="F:mechanosensitive monoatomic ion channel activity"/>
    <property type="evidence" value="ECO:0007669"/>
    <property type="project" value="UniProtKB-UniRule"/>
</dbReference>
<dbReference type="Gene3D" id="1.10.1200.120">
    <property type="entry name" value="Large-conductance mechanosensitive channel, MscL, domain 1"/>
    <property type="match status" value="1"/>
</dbReference>
<dbReference type="HAMAP" id="MF_00115">
    <property type="entry name" value="MscL"/>
    <property type="match status" value="1"/>
</dbReference>
<dbReference type="InterPro" id="IPR019823">
    <property type="entry name" value="Mechanosensitive_channel_CS"/>
</dbReference>
<dbReference type="InterPro" id="IPR001185">
    <property type="entry name" value="MS_channel"/>
</dbReference>
<dbReference type="InterPro" id="IPR037673">
    <property type="entry name" value="MSC/AndL"/>
</dbReference>
<dbReference type="InterPro" id="IPR036019">
    <property type="entry name" value="MscL_channel"/>
</dbReference>
<dbReference type="NCBIfam" id="TIGR00220">
    <property type="entry name" value="mscL"/>
    <property type="match status" value="1"/>
</dbReference>
<dbReference type="NCBIfam" id="NF001843">
    <property type="entry name" value="PRK00567.1-4"/>
    <property type="match status" value="1"/>
</dbReference>
<dbReference type="NCBIfam" id="NF010557">
    <property type="entry name" value="PRK13952.1"/>
    <property type="match status" value="1"/>
</dbReference>
<dbReference type="PANTHER" id="PTHR30266:SF2">
    <property type="entry name" value="LARGE-CONDUCTANCE MECHANOSENSITIVE CHANNEL"/>
    <property type="match status" value="1"/>
</dbReference>
<dbReference type="PANTHER" id="PTHR30266">
    <property type="entry name" value="MECHANOSENSITIVE CHANNEL MSCL"/>
    <property type="match status" value="1"/>
</dbReference>
<dbReference type="Pfam" id="PF01741">
    <property type="entry name" value="MscL"/>
    <property type="match status" value="1"/>
</dbReference>
<dbReference type="PRINTS" id="PR01264">
    <property type="entry name" value="MECHCHANNEL"/>
</dbReference>
<dbReference type="SUPFAM" id="SSF81330">
    <property type="entry name" value="Gated mechanosensitive channel"/>
    <property type="match status" value="1"/>
</dbReference>
<dbReference type="PROSITE" id="PS01327">
    <property type="entry name" value="MSCL"/>
    <property type="match status" value="1"/>
</dbReference>
<comment type="function">
    <text evidence="1">Channel that opens in response to stretch forces in the membrane lipid bilayer. May participate in the regulation of osmotic pressure changes within the cell.</text>
</comment>
<comment type="subunit">
    <text evidence="1">Homopentamer.</text>
</comment>
<comment type="subcellular location">
    <subcellularLocation>
        <location evidence="1">Cell inner membrane</location>
        <topology evidence="1">Multi-pass membrane protein</topology>
    </subcellularLocation>
</comment>
<comment type="similarity">
    <text evidence="1">Belongs to the MscL family.</text>
</comment>
<name>MSCL_PARXL</name>
<organism>
    <name type="scientific">Paraburkholderia xenovorans (strain LB400)</name>
    <dbReference type="NCBI Taxonomy" id="266265"/>
    <lineage>
        <taxon>Bacteria</taxon>
        <taxon>Pseudomonadati</taxon>
        <taxon>Pseudomonadota</taxon>
        <taxon>Betaproteobacteria</taxon>
        <taxon>Burkholderiales</taxon>
        <taxon>Burkholderiaceae</taxon>
        <taxon>Paraburkholderia</taxon>
    </lineage>
</organism>
<evidence type="ECO:0000255" key="1">
    <source>
        <dbReference type="HAMAP-Rule" id="MF_00115"/>
    </source>
</evidence>
<proteinExistence type="inferred from homology"/>
<keyword id="KW-0997">Cell inner membrane</keyword>
<keyword id="KW-1003">Cell membrane</keyword>
<keyword id="KW-0407">Ion channel</keyword>
<keyword id="KW-0406">Ion transport</keyword>
<keyword id="KW-0472">Membrane</keyword>
<keyword id="KW-1185">Reference proteome</keyword>
<keyword id="KW-0812">Transmembrane</keyword>
<keyword id="KW-1133">Transmembrane helix</keyword>
<keyword id="KW-0813">Transport</keyword>
<accession>Q13Z35</accession>
<reference key="1">
    <citation type="journal article" date="2006" name="Proc. Natl. Acad. Sci. U.S.A.">
        <title>Burkholderia xenovorans LB400 harbors a multi-replicon, 9.73-Mbp genome shaped for versatility.</title>
        <authorList>
            <person name="Chain P.S.G."/>
            <person name="Denef V.J."/>
            <person name="Konstantinidis K.T."/>
            <person name="Vergez L.M."/>
            <person name="Agullo L."/>
            <person name="Reyes V.L."/>
            <person name="Hauser L."/>
            <person name="Cordova M."/>
            <person name="Gomez L."/>
            <person name="Gonzalez M."/>
            <person name="Land M."/>
            <person name="Lao V."/>
            <person name="Larimer F."/>
            <person name="LiPuma J.J."/>
            <person name="Mahenthiralingam E."/>
            <person name="Malfatti S.A."/>
            <person name="Marx C.J."/>
            <person name="Parnell J.J."/>
            <person name="Ramette A."/>
            <person name="Richardson P."/>
            <person name="Seeger M."/>
            <person name="Smith D."/>
            <person name="Spilker T."/>
            <person name="Sul W.J."/>
            <person name="Tsoi T.V."/>
            <person name="Ulrich L.E."/>
            <person name="Zhulin I.B."/>
            <person name="Tiedje J.M."/>
        </authorList>
    </citation>
    <scope>NUCLEOTIDE SEQUENCE [LARGE SCALE GENOMIC DNA]</scope>
    <source>
        <strain>LB400</strain>
    </source>
</reference>
<gene>
    <name evidence="1" type="primary">mscL</name>
    <name type="ordered locus">Bxeno_A2116</name>
    <name type="ORF">Bxe_A2316</name>
</gene>
<sequence>MSMVKEFKEFALKGNVMDLAVGVIIGGAFSTIVNSIVKDLIMPVVGLATGGLDFSNKFIRLGAIPPSFKGSPESYKDLQTAGVAVFGYGSFITVLINFLILAFIIFLMVKFINNLRKPAEAAPAEPPPTPEDVLLLREIRDSLKNSPR</sequence>
<protein>
    <recommendedName>
        <fullName evidence="1">Large-conductance mechanosensitive channel</fullName>
    </recommendedName>
</protein>
<feature type="chain" id="PRO_1000015366" description="Large-conductance mechanosensitive channel">
    <location>
        <begin position="1"/>
        <end position="148"/>
    </location>
</feature>
<feature type="transmembrane region" description="Helical" evidence="1">
    <location>
        <begin position="16"/>
        <end position="36"/>
    </location>
</feature>
<feature type="transmembrane region" description="Helical" evidence="1">
    <location>
        <begin position="89"/>
        <end position="109"/>
    </location>
</feature>